<name>AXS_ORYSJ</name>
<gene>
    <name type="ordered locus">Os01g0969100</name>
    <name type="ordered locus">LOC_Os01g73790</name>
    <name type="ORF">OJ1656_A11.20</name>
    <name type="ORF">OsJ_04912</name>
</gene>
<protein>
    <recommendedName>
        <fullName>UDP-D-apiose/UDP-D-xylose synthase</fullName>
    </recommendedName>
</protein>
<comment type="function">
    <text evidence="1">Catalyzes the conversion of UDP-D-glucuronate to a mixture of UDP-D-apiose and UDP-D-xylose. D-Apiose (3-C-hydroxymethyl-d-erythrose) is the only plant cell wall monosaccharide with a branched carbon skeleton and found in rhamnogalacturonan II (RG-II), apiogalacturonan, and several apioglycosides (By similarity).</text>
</comment>
<comment type="cofactor">
    <cofactor>
        <name>NAD(+)</name>
        <dbReference type="ChEBI" id="CHEBI:57540"/>
    </cofactor>
</comment>
<comment type="subunit">
    <text evidence="1">Homodimer.</text>
</comment>
<comment type="subcellular location">
    <subcellularLocation>
        <location evidence="1">Cytoplasm</location>
    </subcellularLocation>
</comment>
<comment type="similarity">
    <text evidence="2">Belongs to the NAD(P)-dependent epimerase/dehydratase family.</text>
</comment>
<keyword id="KW-0961">Cell wall biogenesis/degradation</keyword>
<keyword id="KW-0963">Cytoplasm</keyword>
<keyword id="KW-0520">NAD</keyword>
<keyword id="KW-1185">Reference proteome</keyword>
<reference key="1">
    <citation type="journal article" date="2002" name="Nature">
        <title>The genome sequence and structure of rice chromosome 1.</title>
        <authorList>
            <person name="Sasaki T."/>
            <person name="Matsumoto T."/>
            <person name="Yamamoto K."/>
            <person name="Sakata K."/>
            <person name="Baba T."/>
            <person name="Katayose Y."/>
            <person name="Wu J."/>
            <person name="Niimura Y."/>
            <person name="Cheng Z."/>
            <person name="Nagamura Y."/>
            <person name="Antonio B.A."/>
            <person name="Kanamori H."/>
            <person name="Hosokawa S."/>
            <person name="Masukawa M."/>
            <person name="Arikawa K."/>
            <person name="Chiden Y."/>
            <person name="Hayashi M."/>
            <person name="Okamoto M."/>
            <person name="Ando T."/>
            <person name="Aoki H."/>
            <person name="Arita K."/>
            <person name="Hamada M."/>
            <person name="Harada C."/>
            <person name="Hijishita S."/>
            <person name="Honda M."/>
            <person name="Ichikawa Y."/>
            <person name="Idonuma A."/>
            <person name="Iijima M."/>
            <person name="Ikeda M."/>
            <person name="Ikeno M."/>
            <person name="Ito S."/>
            <person name="Ito T."/>
            <person name="Ito Y."/>
            <person name="Ito Y."/>
            <person name="Iwabuchi A."/>
            <person name="Kamiya K."/>
            <person name="Karasawa W."/>
            <person name="Katagiri S."/>
            <person name="Kikuta A."/>
            <person name="Kobayashi N."/>
            <person name="Kono I."/>
            <person name="Machita K."/>
            <person name="Maehara T."/>
            <person name="Mizuno H."/>
            <person name="Mizubayashi T."/>
            <person name="Mukai Y."/>
            <person name="Nagasaki H."/>
            <person name="Nakashima M."/>
            <person name="Nakama Y."/>
            <person name="Nakamichi Y."/>
            <person name="Nakamura M."/>
            <person name="Namiki N."/>
            <person name="Negishi M."/>
            <person name="Ohta I."/>
            <person name="Ono N."/>
            <person name="Saji S."/>
            <person name="Sakai K."/>
            <person name="Shibata M."/>
            <person name="Shimokawa T."/>
            <person name="Shomura A."/>
            <person name="Song J."/>
            <person name="Takazaki Y."/>
            <person name="Terasawa K."/>
            <person name="Tsuji K."/>
            <person name="Waki K."/>
            <person name="Yamagata H."/>
            <person name="Yamane H."/>
            <person name="Yoshiki S."/>
            <person name="Yoshihara R."/>
            <person name="Yukawa K."/>
            <person name="Zhong H."/>
            <person name="Iwama H."/>
            <person name="Endo T."/>
            <person name="Ito H."/>
            <person name="Hahn J.H."/>
            <person name="Kim H.-I."/>
            <person name="Eun M.-Y."/>
            <person name="Yano M."/>
            <person name="Jiang J."/>
            <person name="Gojobori T."/>
        </authorList>
    </citation>
    <scope>NUCLEOTIDE SEQUENCE [LARGE SCALE GENOMIC DNA]</scope>
    <source>
        <strain>cv. Nipponbare</strain>
    </source>
</reference>
<reference key="2">
    <citation type="journal article" date="2005" name="Nature">
        <title>The map-based sequence of the rice genome.</title>
        <authorList>
            <consortium name="International rice genome sequencing project (IRGSP)"/>
        </authorList>
    </citation>
    <scope>NUCLEOTIDE SEQUENCE [LARGE SCALE GENOMIC DNA]</scope>
    <source>
        <strain>cv. Nipponbare</strain>
    </source>
</reference>
<reference key="3">
    <citation type="journal article" date="2008" name="Nucleic Acids Res.">
        <title>The rice annotation project database (RAP-DB): 2008 update.</title>
        <authorList>
            <consortium name="The rice annotation project (RAP)"/>
        </authorList>
    </citation>
    <scope>GENOME REANNOTATION</scope>
    <source>
        <strain>cv. Nipponbare</strain>
    </source>
</reference>
<reference key="4">
    <citation type="journal article" date="2013" name="Rice">
        <title>Improvement of the Oryza sativa Nipponbare reference genome using next generation sequence and optical map data.</title>
        <authorList>
            <person name="Kawahara Y."/>
            <person name="de la Bastide M."/>
            <person name="Hamilton J.P."/>
            <person name="Kanamori H."/>
            <person name="McCombie W.R."/>
            <person name="Ouyang S."/>
            <person name="Schwartz D.C."/>
            <person name="Tanaka T."/>
            <person name="Wu J."/>
            <person name="Zhou S."/>
            <person name="Childs K.L."/>
            <person name="Davidson R.M."/>
            <person name="Lin H."/>
            <person name="Quesada-Ocampo L."/>
            <person name="Vaillancourt B."/>
            <person name="Sakai H."/>
            <person name="Lee S.S."/>
            <person name="Kim J."/>
            <person name="Numa H."/>
            <person name="Itoh T."/>
            <person name="Buell C.R."/>
            <person name="Matsumoto T."/>
        </authorList>
    </citation>
    <scope>GENOME REANNOTATION</scope>
    <source>
        <strain>cv. Nipponbare</strain>
    </source>
</reference>
<reference key="5">
    <citation type="journal article" date="2005" name="PLoS Biol.">
        <title>The genomes of Oryza sativa: a history of duplications.</title>
        <authorList>
            <person name="Yu J."/>
            <person name="Wang J."/>
            <person name="Lin W."/>
            <person name="Li S."/>
            <person name="Li H."/>
            <person name="Zhou J."/>
            <person name="Ni P."/>
            <person name="Dong W."/>
            <person name="Hu S."/>
            <person name="Zeng C."/>
            <person name="Zhang J."/>
            <person name="Zhang Y."/>
            <person name="Li R."/>
            <person name="Xu Z."/>
            <person name="Li S."/>
            <person name="Li X."/>
            <person name="Zheng H."/>
            <person name="Cong L."/>
            <person name="Lin L."/>
            <person name="Yin J."/>
            <person name="Geng J."/>
            <person name="Li G."/>
            <person name="Shi J."/>
            <person name="Liu J."/>
            <person name="Lv H."/>
            <person name="Li J."/>
            <person name="Wang J."/>
            <person name="Deng Y."/>
            <person name="Ran L."/>
            <person name="Shi X."/>
            <person name="Wang X."/>
            <person name="Wu Q."/>
            <person name="Li C."/>
            <person name="Ren X."/>
            <person name="Wang J."/>
            <person name="Wang X."/>
            <person name="Li D."/>
            <person name="Liu D."/>
            <person name="Zhang X."/>
            <person name="Ji Z."/>
            <person name="Zhao W."/>
            <person name="Sun Y."/>
            <person name="Zhang Z."/>
            <person name="Bao J."/>
            <person name="Han Y."/>
            <person name="Dong L."/>
            <person name="Ji J."/>
            <person name="Chen P."/>
            <person name="Wu S."/>
            <person name="Liu J."/>
            <person name="Xiao Y."/>
            <person name="Bu D."/>
            <person name="Tan J."/>
            <person name="Yang L."/>
            <person name="Ye C."/>
            <person name="Zhang J."/>
            <person name="Xu J."/>
            <person name="Zhou Y."/>
            <person name="Yu Y."/>
            <person name="Zhang B."/>
            <person name="Zhuang S."/>
            <person name="Wei H."/>
            <person name="Liu B."/>
            <person name="Lei M."/>
            <person name="Yu H."/>
            <person name="Li Y."/>
            <person name="Xu H."/>
            <person name="Wei S."/>
            <person name="He X."/>
            <person name="Fang L."/>
            <person name="Zhang Z."/>
            <person name="Zhang Y."/>
            <person name="Huang X."/>
            <person name="Su Z."/>
            <person name="Tong W."/>
            <person name="Li J."/>
            <person name="Tong Z."/>
            <person name="Li S."/>
            <person name="Ye J."/>
            <person name="Wang L."/>
            <person name="Fang L."/>
            <person name="Lei T."/>
            <person name="Chen C.-S."/>
            <person name="Chen H.-C."/>
            <person name="Xu Z."/>
            <person name="Li H."/>
            <person name="Huang H."/>
            <person name="Zhang F."/>
            <person name="Xu H."/>
            <person name="Li N."/>
            <person name="Zhao C."/>
            <person name="Li S."/>
            <person name="Dong L."/>
            <person name="Huang Y."/>
            <person name="Li L."/>
            <person name="Xi Y."/>
            <person name="Qi Q."/>
            <person name="Li W."/>
            <person name="Zhang B."/>
            <person name="Hu W."/>
            <person name="Zhang Y."/>
            <person name="Tian X."/>
            <person name="Jiao Y."/>
            <person name="Liang X."/>
            <person name="Jin J."/>
            <person name="Gao L."/>
            <person name="Zheng W."/>
            <person name="Hao B."/>
            <person name="Liu S.-M."/>
            <person name="Wang W."/>
            <person name="Yuan L."/>
            <person name="Cao M."/>
            <person name="McDermott J."/>
            <person name="Samudrala R."/>
            <person name="Wang J."/>
            <person name="Wong G.K.-S."/>
            <person name="Yang H."/>
        </authorList>
    </citation>
    <scope>NUCLEOTIDE SEQUENCE [LARGE SCALE GENOMIC DNA]</scope>
    <source>
        <strain>cv. Nipponbare</strain>
    </source>
</reference>
<reference key="6">
    <citation type="journal article" date="2003" name="Science">
        <title>Collection, mapping, and annotation of over 28,000 cDNA clones from japonica rice.</title>
        <authorList>
            <consortium name="The rice full-length cDNA consortium"/>
        </authorList>
    </citation>
    <scope>NUCLEOTIDE SEQUENCE [LARGE SCALE MRNA]</scope>
    <source>
        <strain>cv. Nipponbare</strain>
    </source>
</reference>
<sequence length="398" mass="44333">MSSSSSPPAASAAARLDLDGNPIAPLTICMIGAGGFIGSHLCEKLMAETAHVVYAVDVYCDKIRHLVDPAPPHLHGRISFHRLNIKNDSRLEGLIKMADLTINLAAICTPADYNTRPLDTIYSNFIDALPVVKYCSENNKRLIHFSTCEVYGKTIGSFLPTDHPLRKEPEFYVLKEDESPCIFGPIVKQRWSYACAKQLIERLIFAEGAENGLEFTIVRPFNWIGPRMDFIPGVDGPSEGVPRVLACFSNNLLRREPLKLVDGGQSQRTFVYIKDAIEAVHLMIENPARANGQIFNVGNPNNEVTVRQLAEMMTEVYANVSGEPPLDEPMIDVSSKQFYGEGYDDSDKRIPDMTIINKQLGWNPKTPLKDLLETTLTYQHKTYKEAIKRQMSQASASS</sequence>
<organism>
    <name type="scientific">Oryza sativa subsp. japonica</name>
    <name type="common">Rice</name>
    <dbReference type="NCBI Taxonomy" id="39947"/>
    <lineage>
        <taxon>Eukaryota</taxon>
        <taxon>Viridiplantae</taxon>
        <taxon>Streptophyta</taxon>
        <taxon>Embryophyta</taxon>
        <taxon>Tracheophyta</taxon>
        <taxon>Spermatophyta</taxon>
        <taxon>Magnoliopsida</taxon>
        <taxon>Liliopsida</taxon>
        <taxon>Poales</taxon>
        <taxon>Poaceae</taxon>
        <taxon>BOP clade</taxon>
        <taxon>Oryzoideae</taxon>
        <taxon>Oryzeae</taxon>
        <taxon>Oryzinae</taxon>
        <taxon>Oryza</taxon>
        <taxon>Oryza sativa</taxon>
    </lineage>
</organism>
<proteinExistence type="evidence at transcript level"/>
<feature type="chain" id="PRO_0000423719" description="UDP-D-apiose/UDP-D-xylose synthase">
    <location>
        <begin position="1"/>
        <end position="398"/>
    </location>
</feature>
<feature type="active site" description="Proton acceptor" evidence="1">
    <location>
        <position position="193"/>
    </location>
</feature>
<feature type="binding site" evidence="1">
    <location>
        <begin position="57"/>
        <end position="88"/>
    </location>
    <ligand>
        <name>NAD(+)</name>
        <dbReference type="ChEBI" id="CHEBI:57540"/>
    </ligand>
</feature>
<feature type="binding site" evidence="1">
    <location>
        <position position="190"/>
    </location>
    <ligand>
        <name>substrate</name>
    </ligand>
</feature>
<feature type="binding site" evidence="1">
    <location>
        <begin position="193"/>
        <end position="197"/>
    </location>
    <ligand>
        <name>NAD(+)</name>
        <dbReference type="ChEBI" id="CHEBI:57540"/>
    </ligand>
</feature>
<feature type="binding site" evidence="1">
    <location>
        <position position="222"/>
    </location>
    <ligand>
        <name>substrate</name>
    </ligand>
</feature>
<feature type="binding site" evidence="1">
    <location>
        <position position="243"/>
    </location>
    <ligand>
        <name>NAD(+)</name>
        <dbReference type="ChEBI" id="CHEBI:57540"/>
    </ligand>
</feature>
<feature type="binding site" evidence="1">
    <location>
        <begin position="244"/>
        <end position="248"/>
    </location>
    <ligand>
        <name>substrate</name>
    </ligand>
</feature>
<feature type="binding site" evidence="1">
    <location>
        <begin position="261"/>
        <end position="268"/>
    </location>
    <ligand>
        <name>substrate</name>
    </ligand>
</feature>
<feature type="binding site" evidence="1">
    <location>
        <begin position="345"/>
        <end position="349"/>
    </location>
    <ligand>
        <name>substrate</name>
    </ligand>
</feature>
<evidence type="ECO:0000250" key="1"/>
<evidence type="ECO:0000305" key="2"/>
<accession>Q8S9Z2</accession>
<accession>A0A0P0VDB6</accession>
<dbReference type="EMBL" id="AP003448">
    <property type="protein sequence ID" value="BAB85329.1"/>
    <property type="molecule type" value="Genomic_DNA"/>
</dbReference>
<dbReference type="EMBL" id="AP008207">
    <property type="protein sequence ID" value="BAF07437.1"/>
    <property type="molecule type" value="Genomic_DNA"/>
</dbReference>
<dbReference type="EMBL" id="AP014957">
    <property type="protein sequence ID" value="BAS76414.1"/>
    <property type="molecule type" value="Genomic_DNA"/>
</dbReference>
<dbReference type="EMBL" id="CM000138">
    <property type="protein sequence ID" value="EEE56081.1"/>
    <property type="molecule type" value="Genomic_DNA"/>
</dbReference>
<dbReference type="EMBL" id="AK070623">
    <property type="protein sequence ID" value="BAG92063.1"/>
    <property type="molecule type" value="mRNA"/>
</dbReference>
<dbReference type="RefSeq" id="XP_015625150.1">
    <property type="nucleotide sequence ID" value="XM_015769664.1"/>
</dbReference>
<dbReference type="SMR" id="Q8S9Z2"/>
<dbReference type="FunCoup" id="Q8S9Z2">
    <property type="interactions" value="1080"/>
</dbReference>
<dbReference type="STRING" id="39947.Q8S9Z2"/>
<dbReference type="PaxDb" id="39947-Q8S9Z2"/>
<dbReference type="EnsemblPlants" id="Os01t0969100-01">
    <property type="protein sequence ID" value="Os01t0969100-01"/>
    <property type="gene ID" value="Os01g0969100"/>
</dbReference>
<dbReference type="Gramene" id="Os01t0969100-01">
    <property type="protein sequence ID" value="Os01t0969100-01"/>
    <property type="gene ID" value="Os01g0969100"/>
</dbReference>
<dbReference type="KEGG" id="dosa:Os01g0969100"/>
<dbReference type="eggNOG" id="KOG1429">
    <property type="taxonomic scope" value="Eukaryota"/>
</dbReference>
<dbReference type="HOGENOM" id="CLU_007383_7_0_1"/>
<dbReference type="InParanoid" id="Q8S9Z2"/>
<dbReference type="OMA" id="WIYSCAK"/>
<dbReference type="OrthoDB" id="331544at2759"/>
<dbReference type="PlantReactome" id="R-OSA-1119563">
    <property type="pathway name" value="UDP-D-xylose biosynthesis"/>
</dbReference>
<dbReference type="PlantReactome" id="R-OSA-1119574">
    <property type="pathway name" value="UDP-L-arabinose biosynthesis and transport"/>
</dbReference>
<dbReference type="PlantReactome" id="R-OSA-5654894">
    <property type="pathway name" value="UDP-D-apiose biosynthesis"/>
</dbReference>
<dbReference type="Proteomes" id="UP000000763">
    <property type="component" value="Chromosome 1"/>
</dbReference>
<dbReference type="Proteomes" id="UP000007752">
    <property type="component" value="Chromosome 1"/>
</dbReference>
<dbReference type="Proteomes" id="UP000059680">
    <property type="component" value="Chromosome 1"/>
</dbReference>
<dbReference type="GO" id="GO:0005737">
    <property type="term" value="C:cytoplasm"/>
    <property type="evidence" value="ECO:0007669"/>
    <property type="project" value="UniProtKB-SubCell"/>
</dbReference>
<dbReference type="GO" id="GO:0016831">
    <property type="term" value="F:carboxy-lyase activity"/>
    <property type="evidence" value="ECO:0007669"/>
    <property type="project" value="InterPro"/>
</dbReference>
<dbReference type="GO" id="GO:0071555">
    <property type="term" value="P:cell wall organization"/>
    <property type="evidence" value="ECO:0007669"/>
    <property type="project" value="UniProtKB-KW"/>
</dbReference>
<dbReference type="CDD" id="cd05257">
    <property type="entry name" value="Arna_like_SDR_e"/>
    <property type="match status" value="1"/>
</dbReference>
<dbReference type="Gene3D" id="3.40.50.720">
    <property type="entry name" value="NAD(P)-binding Rossmann-like Domain"/>
    <property type="match status" value="1"/>
</dbReference>
<dbReference type="InterPro" id="IPR045869">
    <property type="entry name" value="Arna-like_SDR_e"/>
</dbReference>
<dbReference type="InterPro" id="IPR001509">
    <property type="entry name" value="Epimerase_deHydtase"/>
</dbReference>
<dbReference type="InterPro" id="IPR050177">
    <property type="entry name" value="Lipid_A_modif_metabolic_enz"/>
</dbReference>
<dbReference type="InterPro" id="IPR036291">
    <property type="entry name" value="NAD(P)-bd_dom_sf"/>
</dbReference>
<dbReference type="PANTHER" id="PTHR43245">
    <property type="entry name" value="BIFUNCTIONAL POLYMYXIN RESISTANCE PROTEIN ARNA"/>
    <property type="match status" value="1"/>
</dbReference>
<dbReference type="PANTHER" id="PTHR43245:SF13">
    <property type="entry name" value="UDP-D-APIOSE_UDP-D-XYLOSE SYNTHASE 2"/>
    <property type="match status" value="1"/>
</dbReference>
<dbReference type="Pfam" id="PF01370">
    <property type="entry name" value="Epimerase"/>
    <property type="match status" value="1"/>
</dbReference>
<dbReference type="SUPFAM" id="SSF51735">
    <property type="entry name" value="NAD(P)-binding Rossmann-fold domains"/>
    <property type="match status" value="1"/>
</dbReference>